<organism>
    <name type="scientific">Aspergillus clavatus (strain ATCC 1007 / CBS 513.65 / DSM 816 / NCTC 3887 / NRRL 1 / QM 1276 / 107)</name>
    <dbReference type="NCBI Taxonomy" id="344612"/>
    <lineage>
        <taxon>Eukaryota</taxon>
        <taxon>Fungi</taxon>
        <taxon>Dikarya</taxon>
        <taxon>Ascomycota</taxon>
        <taxon>Pezizomycotina</taxon>
        <taxon>Eurotiomycetes</taxon>
        <taxon>Eurotiomycetidae</taxon>
        <taxon>Eurotiales</taxon>
        <taxon>Aspergillaceae</taxon>
        <taxon>Aspergillus</taxon>
        <taxon>Aspergillus subgen. Fumigati</taxon>
    </lineage>
</organism>
<comment type="function">
    <text evidence="1">Component of the 90S pre-ribosome involved in the maturation of rRNAs. Required for early cleavages of the pre-RNAs in the 40S ribosomal subunit maturation pathway (By similarity).</text>
</comment>
<comment type="subunit">
    <text evidence="1">Associates with 90S and pre-40S pre-ribosomal particles.</text>
</comment>
<comment type="subcellular location">
    <subcellularLocation>
        <location evidence="1">Nucleus</location>
        <location evidence="1">Nucleolus</location>
    </subcellularLocation>
</comment>
<comment type="similarity">
    <text evidence="4">Belongs to the RRP36 family.</text>
</comment>
<proteinExistence type="inferred from homology"/>
<dbReference type="EMBL" id="DS027058">
    <property type="protein sequence ID" value="EAW08690.1"/>
    <property type="molecule type" value="Genomic_DNA"/>
</dbReference>
<dbReference type="RefSeq" id="XP_001270116.1">
    <property type="nucleotide sequence ID" value="XM_001270115.1"/>
</dbReference>
<dbReference type="SMR" id="A1CMA3"/>
<dbReference type="STRING" id="344612.A1CMA3"/>
<dbReference type="EnsemblFungi" id="EAW08690">
    <property type="protein sequence ID" value="EAW08690"/>
    <property type="gene ID" value="ACLA_096230"/>
</dbReference>
<dbReference type="GeneID" id="4702180"/>
<dbReference type="KEGG" id="act:ACLA_096230"/>
<dbReference type="VEuPathDB" id="FungiDB:ACLA_096230"/>
<dbReference type="eggNOG" id="KOG3190">
    <property type="taxonomic scope" value="Eukaryota"/>
</dbReference>
<dbReference type="HOGENOM" id="CLU_048802_0_0_1"/>
<dbReference type="OMA" id="ERKEMPW"/>
<dbReference type="OrthoDB" id="448446at2759"/>
<dbReference type="Proteomes" id="UP000006701">
    <property type="component" value="Unassembled WGS sequence"/>
</dbReference>
<dbReference type="GO" id="GO:0030686">
    <property type="term" value="C:90S preribosome"/>
    <property type="evidence" value="ECO:0007669"/>
    <property type="project" value="TreeGrafter"/>
</dbReference>
<dbReference type="GO" id="GO:0005730">
    <property type="term" value="C:nucleolus"/>
    <property type="evidence" value="ECO:0007669"/>
    <property type="project" value="UniProtKB-SubCell"/>
</dbReference>
<dbReference type="GO" id="GO:0000462">
    <property type="term" value="P:maturation of SSU-rRNA from tricistronic rRNA transcript (SSU-rRNA, 5.8S rRNA, LSU-rRNA)"/>
    <property type="evidence" value="ECO:0007669"/>
    <property type="project" value="TreeGrafter"/>
</dbReference>
<dbReference type="InterPro" id="IPR009292">
    <property type="entry name" value="RRP36"/>
</dbReference>
<dbReference type="PANTHER" id="PTHR21738">
    <property type="entry name" value="RIBOSOMAL RNA PROCESSING PROTEIN 36 HOMOLOG"/>
    <property type="match status" value="1"/>
</dbReference>
<dbReference type="PANTHER" id="PTHR21738:SF0">
    <property type="entry name" value="RIBOSOMAL RNA PROCESSING PROTEIN 36 HOMOLOG"/>
    <property type="match status" value="1"/>
</dbReference>
<dbReference type="Pfam" id="PF06102">
    <property type="entry name" value="RRP36"/>
    <property type="match status" value="1"/>
</dbReference>
<name>RRP36_ASPCL</name>
<evidence type="ECO:0000250" key="1"/>
<evidence type="ECO:0000255" key="2"/>
<evidence type="ECO:0000256" key="3">
    <source>
        <dbReference type="SAM" id="MobiDB-lite"/>
    </source>
</evidence>
<evidence type="ECO:0000305" key="4"/>
<feature type="chain" id="PRO_0000397614" description="rRNA biogenesis protein rrp36">
    <location>
        <begin position="1"/>
        <end position="379"/>
    </location>
</feature>
<feature type="region of interest" description="Disordered" evidence="3">
    <location>
        <begin position="1"/>
        <end position="98"/>
    </location>
</feature>
<feature type="region of interest" description="Disordered" evidence="3">
    <location>
        <begin position="113"/>
        <end position="231"/>
    </location>
</feature>
<feature type="region of interest" description="Disordered" evidence="3">
    <location>
        <begin position="329"/>
        <end position="379"/>
    </location>
</feature>
<feature type="coiled-coil region" evidence="2">
    <location>
        <begin position="242"/>
        <end position="300"/>
    </location>
</feature>
<feature type="compositionally biased region" description="Acidic residues" evidence="3">
    <location>
        <begin position="63"/>
        <end position="94"/>
    </location>
</feature>
<feature type="compositionally biased region" description="Basic residues" evidence="3">
    <location>
        <begin position="117"/>
        <end position="126"/>
    </location>
</feature>
<feature type="compositionally biased region" description="Basic and acidic residues" evidence="3">
    <location>
        <begin position="149"/>
        <end position="163"/>
    </location>
</feature>
<feature type="compositionally biased region" description="Basic and acidic residues" evidence="3">
    <location>
        <begin position="335"/>
        <end position="360"/>
    </location>
</feature>
<gene>
    <name type="primary">rrp36</name>
    <name type="ORF">ACLA_096230</name>
</gene>
<reference key="1">
    <citation type="journal article" date="2008" name="PLoS Genet.">
        <title>Genomic islands in the pathogenic filamentous fungus Aspergillus fumigatus.</title>
        <authorList>
            <person name="Fedorova N.D."/>
            <person name="Khaldi N."/>
            <person name="Joardar V.S."/>
            <person name="Maiti R."/>
            <person name="Amedeo P."/>
            <person name="Anderson M.J."/>
            <person name="Crabtree J."/>
            <person name="Silva J.C."/>
            <person name="Badger J.H."/>
            <person name="Albarraq A."/>
            <person name="Angiuoli S."/>
            <person name="Bussey H."/>
            <person name="Bowyer P."/>
            <person name="Cotty P.J."/>
            <person name="Dyer P.S."/>
            <person name="Egan A."/>
            <person name="Galens K."/>
            <person name="Fraser-Liggett C.M."/>
            <person name="Haas B.J."/>
            <person name="Inman J.M."/>
            <person name="Kent R."/>
            <person name="Lemieux S."/>
            <person name="Malavazi I."/>
            <person name="Orvis J."/>
            <person name="Roemer T."/>
            <person name="Ronning C.M."/>
            <person name="Sundaram J.P."/>
            <person name="Sutton G."/>
            <person name="Turner G."/>
            <person name="Venter J.C."/>
            <person name="White O.R."/>
            <person name="Whitty B.R."/>
            <person name="Youngman P."/>
            <person name="Wolfe K.H."/>
            <person name="Goldman G.H."/>
            <person name="Wortman J.R."/>
            <person name="Jiang B."/>
            <person name="Denning D.W."/>
            <person name="Nierman W.C."/>
        </authorList>
    </citation>
    <scope>NUCLEOTIDE SEQUENCE [LARGE SCALE GENOMIC DNA]</scope>
    <source>
        <strain>ATCC 1007 / CBS 513.65 / DSM 816 / NCTC 3887 / NRRL 1 / QM 1276 / 107</strain>
    </source>
</reference>
<keyword id="KW-0175">Coiled coil</keyword>
<keyword id="KW-0539">Nucleus</keyword>
<keyword id="KW-1185">Reference proteome</keyword>
<keyword id="KW-0687">Ribonucleoprotein</keyword>
<keyword id="KW-0690">Ribosome biogenesis</keyword>
<keyword id="KW-0698">rRNA processing</keyword>
<protein>
    <recommendedName>
        <fullName>rRNA biogenesis protein rrp36</fullName>
    </recommendedName>
    <alternativeName>
        <fullName>Ribosomal RNA-processing protein 36</fullName>
    </alternativeName>
</protein>
<accession>A1CMA3</accession>
<sequence length="379" mass="42377">MAISDLLNRRVRALPEEDEEVYSGESASEAESNDEQIDESRSDDSSDESLEDHGGARSNGSELSDDDEADEDSNISEDSAADDDDESDASEADDMQASLSHISFGALAKAQASLGPHAKRKLKHSKASTAADAADDDDEKAAAAPSPLDDIRARIREAREQKRQGSAPSASKARDAEKPSRSSKHAPMVQSSKHAVSRKRTIIEPPAVLKSRDPRFDPAVRGQGGSRDGGINKAYAFLDEYRANELKELKEKFAKTKDLREKEDLKRAIRATTDRLRTTENRRREKEVLAEHKKREKQLILEGKKSNPYFLKKSELKKQVLVKKYESMGSRQRVKALERRQKKMTAKERKEMPMERRGFENDAAPFNNDGGGRKRRKLA</sequence>